<organism>
    <name type="scientific">Staphylococcus aureus (strain Newman)</name>
    <dbReference type="NCBI Taxonomy" id="426430"/>
    <lineage>
        <taxon>Bacteria</taxon>
        <taxon>Bacillati</taxon>
        <taxon>Bacillota</taxon>
        <taxon>Bacilli</taxon>
        <taxon>Bacillales</taxon>
        <taxon>Staphylococcaceae</taxon>
        <taxon>Staphylococcus</taxon>
    </lineage>
</organism>
<sequence length="185" mass="20554">MISVNDFKTGLTISVDNAIWKVIDFQHVKPGKGSAFVRSKLRNLRTGAIQEKTFRAGEKVEPAMIENRRMQYLYADGDNHVFMDNESFEQTELSSDYLKEELNYLKEGMEVQIQTYEGETIGVELPKTVELTVTETEPGIKGDTATGATKSATVETGYTLNVPLFVNEGDVLIINTGDGSYISRG</sequence>
<gene>
    <name evidence="1" type="primary">efp</name>
    <name type="ordered locus">NWMN_1433</name>
</gene>
<dbReference type="EMBL" id="AP009351">
    <property type="protein sequence ID" value="BAF67705.1"/>
    <property type="molecule type" value="Genomic_DNA"/>
</dbReference>
<dbReference type="RefSeq" id="WP_000626504.1">
    <property type="nucleotide sequence ID" value="NZ_JBBIAE010000001.1"/>
</dbReference>
<dbReference type="SMR" id="A6QH73"/>
<dbReference type="KEGG" id="sae:NWMN_1433"/>
<dbReference type="HOGENOM" id="CLU_074944_0_1_9"/>
<dbReference type="UniPathway" id="UPA00345"/>
<dbReference type="Proteomes" id="UP000006386">
    <property type="component" value="Chromosome"/>
</dbReference>
<dbReference type="GO" id="GO:0005737">
    <property type="term" value="C:cytoplasm"/>
    <property type="evidence" value="ECO:0007669"/>
    <property type="project" value="UniProtKB-SubCell"/>
</dbReference>
<dbReference type="GO" id="GO:0003746">
    <property type="term" value="F:translation elongation factor activity"/>
    <property type="evidence" value="ECO:0007669"/>
    <property type="project" value="UniProtKB-UniRule"/>
</dbReference>
<dbReference type="GO" id="GO:0043043">
    <property type="term" value="P:peptide biosynthetic process"/>
    <property type="evidence" value="ECO:0007669"/>
    <property type="project" value="InterPro"/>
</dbReference>
<dbReference type="CDD" id="cd04470">
    <property type="entry name" value="S1_EF-P_repeat_1"/>
    <property type="match status" value="1"/>
</dbReference>
<dbReference type="CDD" id="cd05794">
    <property type="entry name" value="S1_EF-P_repeat_2"/>
    <property type="match status" value="1"/>
</dbReference>
<dbReference type="FunFam" id="2.30.30.30:FF:000010">
    <property type="entry name" value="Elongation factor P"/>
    <property type="match status" value="1"/>
</dbReference>
<dbReference type="FunFam" id="2.40.50.140:FF:000004">
    <property type="entry name" value="Elongation factor P"/>
    <property type="match status" value="1"/>
</dbReference>
<dbReference type="FunFam" id="2.40.50.140:FF:000009">
    <property type="entry name" value="Elongation factor P"/>
    <property type="match status" value="1"/>
</dbReference>
<dbReference type="Gene3D" id="2.30.30.30">
    <property type="match status" value="1"/>
</dbReference>
<dbReference type="Gene3D" id="2.40.50.140">
    <property type="entry name" value="Nucleic acid-binding proteins"/>
    <property type="match status" value="2"/>
</dbReference>
<dbReference type="HAMAP" id="MF_00141">
    <property type="entry name" value="EF_P"/>
    <property type="match status" value="1"/>
</dbReference>
<dbReference type="InterPro" id="IPR015365">
    <property type="entry name" value="Elong-fact-P_C"/>
</dbReference>
<dbReference type="InterPro" id="IPR012340">
    <property type="entry name" value="NA-bd_OB-fold"/>
</dbReference>
<dbReference type="InterPro" id="IPR014722">
    <property type="entry name" value="Rib_uL2_dom2"/>
</dbReference>
<dbReference type="InterPro" id="IPR020599">
    <property type="entry name" value="Transl_elong_fac_P/YeiP"/>
</dbReference>
<dbReference type="InterPro" id="IPR013185">
    <property type="entry name" value="Transl_elong_KOW-like"/>
</dbReference>
<dbReference type="InterPro" id="IPR001059">
    <property type="entry name" value="Transl_elong_P/YeiP_cen"/>
</dbReference>
<dbReference type="InterPro" id="IPR013852">
    <property type="entry name" value="Transl_elong_P/YeiP_CS"/>
</dbReference>
<dbReference type="InterPro" id="IPR011768">
    <property type="entry name" value="Transl_elongation_fac_P"/>
</dbReference>
<dbReference type="InterPro" id="IPR008991">
    <property type="entry name" value="Translation_prot_SH3-like_sf"/>
</dbReference>
<dbReference type="NCBIfam" id="TIGR00038">
    <property type="entry name" value="efp"/>
    <property type="match status" value="1"/>
</dbReference>
<dbReference type="NCBIfam" id="NF001810">
    <property type="entry name" value="PRK00529.1"/>
    <property type="match status" value="1"/>
</dbReference>
<dbReference type="PANTHER" id="PTHR30053">
    <property type="entry name" value="ELONGATION FACTOR P"/>
    <property type="match status" value="1"/>
</dbReference>
<dbReference type="PANTHER" id="PTHR30053:SF12">
    <property type="entry name" value="ELONGATION FACTOR P (EF-P) FAMILY PROTEIN"/>
    <property type="match status" value="1"/>
</dbReference>
<dbReference type="Pfam" id="PF01132">
    <property type="entry name" value="EFP"/>
    <property type="match status" value="1"/>
</dbReference>
<dbReference type="Pfam" id="PF08207">
    <property type="entry name" value="EFP_N"/>
    <property type="match status" value="1"/>
</dbReference>
<dbReference type="Pfam" id="PF09285">
    <property type="entry name" value="Elong-fact-P_C"/>
    <property type="match status" value="1"/>
</dbReference>
<dbReference type="PIRSF" id="PIRSF005901">
    <property type="entry name" value="EF-P"/>
    <property type="match status" value="1"/>
</dbReference>
<dbReference type="SMART" id="SM01185">
    <property type="entry name" value="EFP"/>
    <property type="match status" value="1"/>
</dbReference>
<dbReference type="SMART" id="SM00841">
    <property type="entry name" value="Elong-fact-P_C"/>
    <property type="match status" value="1"/>
</dbReference>
<dbReference type="SUPFAM" id="SSF50249">
    <property type="entry name" value="Nucleic acid-binding proteins"/>
    <property type="match status" value="2"/>
</dbReference>
<dbReference type="SUPFAM" id="SSF50104">
    <property type="entry name" value="Translation proteins SH3-like domain"/>
    <property type="match status" value="1"/>
</dbReference>
<dbReference type="PROSITE" id="PS01275">
    <property type="entry name" value="EFP"/>
    <property type="match status" value="1"/>
</dbReference>
<comment type="function">
    <text evidence="1">Involved in peptide bond synthesis. Stimulates efficient translation and peptide-bond synthesis on native or reconstituted 70S ribosomes in vitro. Probably functions indirectly by altering the affinity of the ribosome for aminoacyl-tRNA, thus increasing their reactivity as acceptors for peptidyl transferase.</text>
</comment>
<comment type="pathway">
    <text evidence="1">Protein biosynthesis; polypeptide chain elongation.</text>
</comment>
<comment type="subcellular location">
    <subcellularLocation>
        <location evidence="1">Cytoplasm</location>
    </subcellularLocation>
</comment>
<comment type="similarity">
    <text evidence="1">Belongs to the elongation factor P family.</text>
</comment>
<feature type="chain" id="PRO_1000071460" description="Elongation factor P">
    <location>
        <begin position="1"/>
        <end position="185"/>
    </location>
</feature>
<evidence type="ECO:0000255" key="1">
    <source>
        <dbReference type="HAMAP-Rule" id="MF_00141"/>
    </source>
</evidence>
<name>EFP_STAAE</name>
<reference key="1">
    <citation type="journal article" date="2008" name="J. Bacteriol.">
        <title>Genome sequence of Staphylococcus aureus strain Newman and comparative analysis of staphylococcal genomes: polymorphism and evolution of two major pathogenicity islands.</title>
        <authorList>
            <person name="Baba T."/>
            <person name="Bae T."/>
            <person name="Schneewind O."/>
            <person name="Takeuchi F."/>
            <person name="Hiramatsu K."/>
        </authorList>
    </citation>
    <scope>NUCLEOTIDE SEQUENCE [LARGE SCALE GENOMIC DNA]</scope>
    <source>
        <strain>Newman</strain>
    </source>
</reference>
<proteinExistence type="inferred from homology"/>
<accession>A6QH73</accession>
<keyword id="KW-0963">Cytoplasm</keyword>
<keyword id="KW-0251">Elongation factor</keyword>
<keyword id="KW-0648">Protein biosynthesis</keyword>
<protein>
    <recommendedName>
        <fullName evidence="1">Elongation factor P</fullName>
        <shortName evidence="1">EF-P</shortName>
    </recommendedName>
</protein>